<organism>
    <name type="scientific">Agelena orientalis</name>
    <name type="common">Funnel-web spider</name>
    <dbReference type="NCBI Taxonomy" id="293813"/>
    <lineage>
        <taxon>Eukaryota</taxon>
        <taxon>Metazoa</taxon>
        <taxon>Ecdysozoa</taxon>
        <taxon>Arthropoda</taxon>
        <taxon>Chelicerata</taxon>
        <taxon>Arachnida</taxon>
        <taxon>Araneae</taxon>
        <taxon>Araneomorphae</taxon>
        <taxon>Entelegynae</taxon>
        <taxon>Agelenidae</taxon>
        <taxon>Agelena</taxon>
    </lineage>
</organism>
<reference key="1">
    <citation type="journal article" date="2005" name="Proteins">
        <title>A novel strategy for the identification of toxinlike structures in spider venom.</title>
        <authorList>
            <person name="Kozlov S.A."/>
            <person name="Malyavka A."/>
            <person name="McCutchen B."/>
            <person name="Lu A."/>
            <person name="Schepers E."/>
            <person name="Herrmann R."/>
            <person name="Grishin E.V."/>
        </authorList>
    </citation>
    <scope>NUCLEOTIDE SEQUENCE [MRNA]</scope>
    <source>
        <tissue>Venom gland</tissue>
    </source>
</reference>
<reference key="2">
    <citation type="journal article" date="2010" name="J. Biol. Chem.">
        <title>Unique bell-shaped voltage-dependent modulation of Na+ channel gating by novel insect-selective toxins from the spider Agelena orientalis.</title>
        <authorList>
            <person name="Billen B."/>
            <person name="Vassilevski A."/>
            <person name="Nikolsky A."/>
            <person name="Debaveye S."/>
            <person name="Tytgat J."/>
            <person name="Grishin E."/>
        </authorList>
    </citation>
    <scope>PROTEIN SEQUENCE OF 35-72</scope>
    <scope>FUNCTION</scope>
    <scope>SUBCELLULAR LOCATION</scope>
    <scope>TISSUE SPECIFICITY</scope>
    <scope>MASS SPECTROMETRY</scope>
    <scope>TOXIC DOSE</scope>
    <scope>BIOASSAY</scope>
    <scope>AMIDATION AT ASN-72</scope>
    <source>
        <tissue>Venom</tissue>
    </source>
</reference>
<feature type="signal peptide" evidence="3">
    <location>
        <begin position="1"/>
        <end position="20"/>
    </location>
</feature>
<feature type="propeptide" id="PRO_5000093665" evidence="4">
    <location>
        <begin position="21"/>
        <end position="34"/>
    </location>
</feature>
<feature type="chain" id="PRO_5000093666" description="U3-agatoxin-Ao1f" evidence="4">
    <location>
        <begin position="35"/>
        <end position="72"/>
    </location>
</feature>
<feature type="modified residue" description="Asparagine amide" evidence="4">
    <location>
        <position position="72"/>
    </location>
</feature>
<feature type="disulfide bond" evidence="2">
    <location>
        <begin position="37"/>
        <end position="53"/>
    </location>
</feature>
<feature type="disulfide bond" evidence="2">
    <location>
        <begin position="44"/>
        <end position="58"/>
    </location>
</feature>
<feature type="disulfide bond" evidence="2">
    <location>
        <begin position="52"/>
        <end position="68"/>
    </location>
</feature>
<feature type="disulfide bond" evidence="2">
    <location>
        <begin position="60"/>
        <end position="66"/>
    </location>
</feature>
<proteinExistence type="evidence at protein level"/>
<comment type="function">
    <text evidence="4">Insecticidal neurotoxin that modulates the insect Nav channel (DmNaV1/tipE (para/tipE)) in a unique manner, with both the activation and inactivation processes being affected. The voltage dependence of activation is shifted toward more hyperpolarized potentials (analogous to site 4 toxins) and a non-inactivating persistent sodium current is induced (site 3-like action). Interestingly, both effects take place in a voltage-dependent manner, producing a bell-shaped curve between -80 and 0 mV. In vivo, induces an irreversible spastic paralysis when injected into insects.</text>
</comment>
<comment type="subcellular location">
    <subcellularLocation>
        <location evidence="4">Secreted</location>
    </subcellularLocation>
</comment>
<comment type="tissue specificity">
    <text evidence="4">Expressed by the venom gland.</text>
</comment>
<comment type="domain">
    <text evidence="1">The presence of a 'disulfide through disulfide knot' structurally defines this protein as a knottin.</text>
</comment>
<comment type="mass spectrometry" mass="4272.5" error="0.5" method="MALDI" evidence="4"/>
<comment type="toxic dose">
    <text evidence="4">LD(50) is 7 mg/kg in flesh fly larvae (S.carnaria).</text>
</comment>
<comment type="miscellaneous">
    <text evidence="7">Negative results: does not affect rNav1.2/beta1 (SCN2A/SCN1B) channel at up to 1 uM.</text>
</comment>
<comment type="similarity">
    <text evidence="6">Belongs to the neurotoxin 07 (Beta/delta-agtx) family. 03 (aga-4) subfamily. Aga sub-subfamily.</text>
</comment>
<sequence length="74" mass="8214">MRAIISLLLISTMVFGVIEAVSLEEGLKIFEGERGDCVGESQQCADWSGPYCCKGYYCTCRYFPKCICVNDNGK</sequence>
<evidence type="ECO:0000250" key="1"/>
<evidence type="ECO:0000250" key="2">
    <source>
        <dbReference type="UniProtKB" id="P11061"/>
    </source>
</evidence>
<evidence type="ECO:0000255" key="3"/>
<evidence type="ECO:0000269" key="4">
    <source>
    </source>
</evidence>
<evidence type="ECO:0000303" key="5">
    <source>
    </source>
</evidence>
<evidence type="ECO:0000305" key="6"/>
<evidence type="ECO:0000305" key="7">
    <source>
    </source>
</evidence>
<evidence type="ECO:0000312" key="8">
    <source>
        <dbReference type="EMBL" id="AAU87891.1"/>
    </source>
</evidence>
<dbReference type="EMBL" id="AY681331">
    <property type="protein sequence ID" value="AAU87891.1"/>
    <property type="molecule type" value="mRNA"/>
</dbReference>
<dbReference type="SMR" id="Q5Y4V3"/>
<dbReference type="ArachnoServer" id="AS000081">
    <property type="toxin name" value="U3-agatoxin-Ao1f"/>
</dbReference>
<dbReference type="GO" id="GO:0005576">
    <property type="term" value="C:extracellular region"/>
    <property type="evidence" value="ECO:0007669"/>
    <property type="project" value="UniProtKB-SubCell"/>
</dbReference>
<dbReference type="GO" id="GO:0017080">
    <property type="term" value="F:sodium channel regulator activity"/>
    <property type="evidence" value="ECO:0007669"/>
    <property type="project" value="UniProtKB-KW"/>
</dbReference>
<dbReference type="GO" id="GO:0090729">
    <property type="term" value="F:toxin activity"/>
    <property type="evidence" value="ECO:0007669"/>
    <property type="project" value="UniProtKB-KW"/>
</dbReference>
<dbReference type="InterPro" id="IPR016328">
    <property type="entry name" value="Beta/delta-agatoxin_fam"/>
</dbReference>
<dbReference type="Pfam" id="PF05980">
    <property type="entry name" value="Toxin_7"/>
    <property type="match status" value="1"/>
</dbReference>
<dbReference type="SUPFAM" id="SSF57059">
    <property type="entry name" value="omega toxin-like"/>
    <property type="match status" value="1"/>
</dbReference>
<dbReference type="PROSITE" id="PS60015">
    <property type="entry name" value="MU_AGATOXIN"/>
    <property type="match status" value="1"/>
</dbReference>
<accession>Q5Y4V3</accession>
<name>T4G1F_AGEOR</name>
<keyword id="KW-0027">Amidation</keyword>
<keyword id="KW-0903">Direct protein sequencing</keyword>
<keyword id="KW-1015">Disulfide bond</keyword>
<keyword id="KW-0872">Ion channel impairing toxin</keyword>
<keyword id="KW-0960">Knottin</keyword>
<keyword id="KW-0528">Neurotoxin</keyword>
<keyword id="KW-0964">Secreted</keyword>
<keyword id="KW-0732">Signal</keyword>
<keyword id="KW-0800">Toxin</keyword>
<keyword id="KW-0738">Voltage-gated sodium channel impairing toxin</keyword>
<protein>
    <recommendedName>
        <fullName evidence="6">U3-agatoxin-Ao1f</fullName>
        <shortName evidence="6">U3-AGTX-Ao1f</shortName>
    </recommendedName>
    <alternativeName>
        <fullName evidence="5">Beta/delta-agatoxin-1</fullName>
    </alternativeName>
    <alternativeName>
        <fullName evidence="8">Mu-2Aga_07</fullName>
    </alternativeName>
</protein>